<accession>B4J6Q0</accession>
<keyword id="KW-0524">Neurogenesis</keyword>
<keyword id="KW-1185">Reference proteome</keyword>
<keyword id="KW-0770">Synapse</keyword>
<keyword id="KW-0833">Ubl conjugation pathway</keyword>
<protein>
    <recommendedName>
        <fullName evidence="2">F-box/SPRY domain-containing protein 1</fullName>
    </recommendedName>
</protein>
<name>FBSP1_DROGR</name>
<evidence type="ECO:0000250" key="1"/>
<evidence type="ECO:0000250" key="2">
    <source>
        <dbReference type="UniProtKB" id="Q9V6L9"/>
    </source>
</evidence>
<evidence type="ECO:0000255" key="3"/>
<evidence type="ECO:0000255" key="4">
    <source>
        <dbReference type="PROSITE-ProRule" id="PRU00548"/>
    </source>
</evidence>
<evidence type="ECO:0000305" key="5"/>
<evidence type="ECO:0000312" key="6">
    <source>
        <dbReference type="EMBL" id="EDW00953.1"/>
    </source>
</evidence>
<dbReference type="EMBL" id="CH916367">
    <property type="protein sequence ID" value="EDW00953.1"/>
    <property type="molecule type" value="Genomic_DNA"/>
</dbReference>
<dbReference type="SMR" id="B4J6Q0"/>
<dbReference type="FunCoup" id="B4J6Q0">
    <property type="interactions" value="1202"/>
</dbReference>
<dbReference type="STRING" id="7222.B4J6Q0"/>
<dbReference type="EnsemblMetazoa" id="FBtr0156583">
    <property type="protein sequence ID" value="FBpp0155075"/>
    <property type="gene ID" value="FBgn0128631"/>
</dbReference>
<dbReference type="EnsemblMetazoa" id="XM_001986050.2">
    <property type="protein sequence ID" value="XP_001986086.1"/>
    <property type="gene ID" value="LOC6561060"/>
</dbReference>
<dbReference type="GeneID" id="6561060"/>
<dbReference type="KEGG" id="dgr:6561060"/>
<dbReference type="CTD" id="36460"/>
<dbReference type="eggNOG" id="KOG3953">
    <property type="taxonomic scope" value="Eukaryota"/>
</dbReference>
<dbReference type="HOGENOM" id="CLU_046756_1_0_1"/>
<dbReference type="InParanoid" id="B4J6Q0"/>
<dbReference type="OMA" id="ATKRASM"/>
<dbReference type="OrthoDB" id="2398163at2759"/>
<dbReference type="PhylomeDB" id="B4J6Q0"/>
<dbReference type="UniPathway" id="UPA00143"/>
<dbReference type="Proteomes" id="UP000001070">
    <property type="component" value="Unassembled WGS sequence"/>
</dbReference>
<dbReference type="GO" id="GO:0005938">
    <property type="term" value="C:cell cortex"/>
    <property type="evidence" value="ECO:0007669"/>
    <property type="project" value="EnsemblMetazoa"/>
</dbReference>
<dbReference type="GO" id="GO:0031594">
    <property type="term" value="C:neuromuscular junction"/>
    <property type="evidence" value="ECO:0000250"/>
    <property type="project" value="UniProtKB"/>
</dbReference>
<dbReference type="GO" id="GO:0005634">
    <property type="term" value="C:nucleus"/>
    <property type="evidence" value="ECO:0007669"/>
    <property type="project" value="EnsemblMetazoa"/>
</dbReference>
<dbReference type="GO" id="GO:0045495">
    <property type="term" value="C:pole plasm"/>
    <property type="evidence" value="ECO:0007669"/>
    <property type="project" value="EnsemblMetazoa"/>
</dbReference>
<dbReference type="GO" id="GO:0019005">
    <property type="term" value="C:SCF ubiquitin ligase complex"/>
    <property type="evidence" value="ECO:0007669"/>
    <property type="project" value="EnsemblMetazoa"/>
</dbReference>
<dbReference type="GO" id="GO:0010629">
    <property type="term" value="P:negative regulation of gene expression"/>
    <property type="evidence" value="ECO:0007669"/>
    <property type="project" value="EnsemblMetazoa"/>
</dbReference>
<dbReference type="GO" id="GO:0045886">
    <property type="term" value="P:negative regulation of synaptic assembly at neuromuscular junction"/>
    <property type="evidence" value="ECO:0000250"/>
    <property type="project" value="UniProtKB"/>
</dbReference>
<dbReference type="GO" id="GO:0007274">
    <property type="term" value="P:neuromuscular synaptic transmission"/>
    <property type="evidence" value="ECO:0000250"/>
    <property type="project" value="UniProtKB"/>
</dbReference>
<dbReference type="GO" id="GO:0045732">
    <property type="term" value="P:positive regulation of protein catabolic process"/>
    <property type="evidence" value="ECO:0007669"/>
    <property type="project" value="EnsemblMetazoa"/>
</dbReference>
<dbReference type="GO" id="GO:0043161">
    <property type="term" value="P:proteasome-mediated ubiquitin-dependent protein catabolic process"/>
    <property type="evidence" value="ECO:0007669"/>
    <property type="project" value="TreeGrafter"/>
</dbReference>
<dbReference type="GO" id="GO:0016567">
    <property type="term" value="P:protein ubiquitination"/>
    <property type="evidence" value="ECO:0007669"/>
    <property type="project" value="UniProtKB-UniPathway"/>
</dbReference>
<dbReference type="GO" id="GO:0060386">
    <property type="term" value="P:synapse assembly involved in innervation"/>
    <property type="evidence" value="ECO:0007669"/>
    <property type="project" value="TreeGrafter"/>
</dbReference>
<dbReference type="CDD" id="cd12907">
    <property type="entry name" value="SPRY_Fbox"/>
    <property type="match status" value="1"/>
</dbReference>
<dbReference type="FunFam" id="1.20.1280.50:FF:000140">
    <property type="entry name" value="F-box/SPRY domain-containing protein 1"/>
    <property type="match status" value="1"/>
</dbReference>
<dbReference type="FunFam" id="2.60.120.920:FF:000017">
    <property type="entry name" value="F-box/SPRY domain-containing protein 1"/>
    <property type="match status" value="1"/>
</dbReference>
<dbReference type="Gene3D" id="1.20.1280.50">
    <property type="match status" value="1"/>
</dbReference>
<dbReference type="Gene3D" id="2.60.120.920">
    <property type="match status" value="1"/>
</dbReference>
<dbReference type="InterPro" id="IPR001870">
    <property type="entry name" value="B30.2/SPRY"/>
</dbReference>
<dbReference type="InterPro" id="IPR043136">
    <property type="entry name" value="B30.2/SPRY_sf"/>
</dbReference>
<dbReference type="InterPro" id="IPR013320">
    <property type="entry name" value="ConA-like_dom_sf"/>
</dbReference>
<dbReference type="InterPro" id="IPR036047">
    <property type="entry name" value="F-box-like_dom_sf"/>
</dbReference>
<dbReference type="InterPro" id="IPR001810">
    <property type="entry name" value="F-box_dom"/>
</dbReference>
<dbReference type="InterPro" id="IPR050672">
    <property type="entry name" value="FBXO45-Fsn/SPSB_families"/>
</dbReference>
<dbReference type="InterPro" id="IPR003877">
    <property type="entry name" value="SPRY_dom"/>
</dbReference>
<dbReference type="InterPro" id="IPR035784">
    <property type="entry name" value="SPRY_FBXO45"/>
</dbReference>
<dbReference type="PANTHER" id="PTHR12245:SF7">
    <property type="entry name" value="F-BOX_SPRY DOMAIN-CONTAINING PROTEIN 1"/>
    <property type="match status" value="1"/>
</dbReference>
<dbReference type="PANTHER" id="PTHR12245">
    <property type="entry name" value="SPRY DOMAIN CONTAINING SOCS BOX PROTEIN"/>
    <property type="match status" value="1"/>
</dbReference>
<dbReference type="Pfam" id="PF12937">
    <property type="entry name" value="F-box-like"/>
    <property type="match status" value="1"/>
</dbReference>
<dbReference type="Pfam" id="PF00622">
    <property type="entry name" value="SPRY"/>
    <property type="match status" value="1"/>
</dbReference>
<dbReference type="SMART" id="SM00449">
    <property type="entry name" value="SPRY"/>
    <property type="match status" value="1"/>
</dbReference>
<dbReference type="SUPFAM" id="SSF49899">
    <property type="entry name" value="Concanavalin A-like lectins/glucanases"/>
    <property type="match status" value="1"/>
</dbReference>
<dbReference type="SUPFAM" id="SSF81383">
    <property type="entry name" value="F-box domain"/>
    <property type="match status" value="1"/>
</dbReference>
<dbReference type="PROSITE" id="PS50188">
    <property type="entry name" value="B302_SPRY"/>
    <property type="match status" value="1"/>
</dbReference>
<organism>
    <name type="scientific">Drosophila grimshawi</name>
    <name type="common">Hawaiian fruit fly</name>
    <name type="synonym">Idiomyia grimshawi</name>
    <dbReference type="NCBI Taxonomy" id="7222"/>
    <lineage>
        <taxon>Eukaryota</taxon>
        <taxon>Metazoa</taxon>
        <taxon>Ecdysozoa</taxon>
        <taxon>Arthropoda</taxon>
        <taxon>Hexapoda</taxon>
        <taxon>Insecta</taxon>
        <taxon>Pterygota</taxon>
        <taxon>Neoptera</taxon>
        <taxon>Endopterygota</taxon>
        <taxon>Diptera</taxon>
        <taxon>Brachycera</taxon>
        <taxon>Muscomorpha</taxon>
        <taxon>Ephydroidea</taxon>
        <taxon>Drosophilidae</taxon>
        <taxon>Drosophila</taxon>
        <taxon>Hawaiian Drosophila</taxon>
    </lineage>
</organism>
<sequence>MVDPLCNYNVLESIFSYLELNDLNRCSQVCKSWYHFLNDENSDVWRWHCLRKLPKEAVKSDLLSSVTTYKTKLRAYLHAWSPNDCSRNVYVKPNGFTLHRNPVAQSTDAARGKIGFRHGRHAWEVIWEGPLGTVAVIGISTKEAALQCHGYVALLGSDDQSWGWNLVENHLLHNGDTQGSYPLLNNAPKYQVGERIRVILDCDDNTLSFEKNYEFLGVAFRGLPDKKLYPTVSAVYGNTEVSMVYLGTPLDG</sequence>
<comment type="function">
    <text evidence="1">Required in the presynaptic motoneuron to down-regulate the levels of wnd and restrain synaptic terminal growth at the neuromuscular junction (NMJ).</text>
</comment>
<comment type="pathway">
    <text evidence="2">Protein modification; protein ubiquitination.</text>
</comment>
<comment type="subunit">
    <text evidence="2">Component of an E3 ubiquitin ligase complex composed of hiw and Fsn.</text>
</comment>
<comment type="subcellular location">
    <subcellularLocation>
        <location evidence="2">Synapse</location>
    </subcellularLocation>
</comment>
<comment type="similarity">
    <text evidence="5">Belongs to the FBXO45/Fsn family.</text>
</comment>
<proteinExistence type="inferred from homology"/>
<gene>
    <name evidence="2" type="primary">Fsn</name>
    <name type="ORF">GH21169</name>
</gene>
<feature type="chain" id="PRO_0000383312" description="F-box/SPRY domain-containing protein 1">
    <location>
        <begin position="1"/>
        <end position="252"/>
    </location>
</feature>
<feature type="domain" description="F-box" evidence="3">
    <location>
        <begin position="1"/>
        <end position="48"/>
    </location>
</feature>
<feature type="domain" description="B30.2/SPRY" evidence="4">
    <location>
        <begin position="58"/>
        <end position="250"/>
    </location>
</feature>
<reference evidence="6" key="1">
    <citation type="journal article" date="2007" name="Nature">
        <title>Evolution of genes and genomes on the Drosophila phylogeny.</title>
        <authorList>
            <consortium name="Drosophila 12 genomes consortium"/>
        </authorList>
    </citation>
    <scope>NUCLEOTIDE SEQUENCE [LARGE SCALE GENOMIC DNA]</scope>
    <source>
        <strain evidence="6">Tucson 15287-2541.00</strain>
    </source>
</reference>